<name>RPB10_ASFK5</name>
<proteinExistence type="inferred from homology"/>
<organism>
    <name type="scientific">African swine fever virus (isolate Pig/Kenya/KEN-50/1950)</name>
    <name type="common">ASFV</name>
    <dbReference type="NCBI Taxonomy" id="561445"/>
    <lineage>
        <taxon>Viruses</taxon>
        <taxon>Varidnaviria</taxon>
        <taxon>Bamfordvirae</taxon>
        <taxon>Nucleocytoviricota</taxon>
        <taxon>Pokkesviricetes</taxon>
        <taxon>Asfuvirales</taxon>
        <taxon>Asfarviridae</taxon>
        <taxon>Asfivirus</taxon>
        <taxon>African swine fever virus</taxon>
    </lineage>
</organism>
<evidence type="ECO:0000250" key="1">
    <source>
        <dbReference type="UniProtKB" id="P22139"/>
    </source>
</evidence>
<evidence type="ECO:0000250" key="2">
    <source>
        <dbReference type="UniProtKB" id="P42488"/>
    </source>
</evidence>
<evidence type="ECO:0000305" key="3"/>
<protein>
    <recommendedName>
        <fullName evidence="2">DNA-directed RNA polymerase RPB10 homolog</fullName>
        <shortName evidence="3">RPB10 homolog</shortName>
    </recommendedName>
</protein>
<feature type="chain" id="PRO_0000373081" description="DNA-directed RNA polymerase RPB10 homolog">
    <location>
        <begin position="1"/>
        <end position="80"/>
    </location>
</feature>
<feature type="binding site" evidence="1">
    <location>
        <position position="7"/>
    </location>
    <ligand>
        <name>Zn(2+)</name>
        <dbReference type="ChEBI" id="CHEBI:29105"/>
    </ligand>
</feature>
<feature type="binding site" evidence="1">
    <location>
        <position position="10"/>
    </location>
    <ligand>
        <name>Zn(2+)</name>
        <dbReference type="ChEBI" id="CHEBI:29105"/>
    </ligand>
</feature>
<feature type="binding site" evidence="1">
    <location>
        <position position="65"/>
    </location>
    <ligand>
        <name>Zn(2+)</name>
        <dbReference type="ChEBI" id="CHEBI:29105"/>
    </ligand>
</feature>
<feature type="binding site" evidence="1">
    <location>
        <position position="66"/>
    </location>
    <ligand>
        <name>Zn(2+)</name>
        <dbReference type="ChEBI" id="CHEBI:29105"/>
    </ligand>
</feature>
<accession>P0C982</accession>
<dbReference type="EMBL" id="AY261360">
    <property type="status" value="NOT_ANNOTATED_CDS"/>
    <property type="molecule type" value="Genomic_DNA"/>
</dbReference>
<dbReference type="SMR" id="P0C982"/>
<dbReference type="Proteomes" id="UP000000861">
    <property type="component" value="Segment"/>
</dbReference>
<dbReference type="GO" id="GO:0000428">
    <property type="term" value="C:DNA-directed RNA polymerase complex"/>
    <property type="evidence" value="ECO:0007669"/>
    <property type="project" value="UniProtKB-KW"/>
</dbReference>
<dbReference type="GO" id="GO:0030430">
    <property type="term" value="C:host cell cytoplasm"/>
    <property type="evidence" value="ECO:0007669"/>
    <property type="project" value="UniProtKB-SubCell"/>
</dbReference>
<dbReference type="GO" id="GO:0003677">
    <property type="term" value="F:DNA binding"/>
    <property type="evidence" value="ECO:0007669"/>
    <property type="project" value="InterPro"/>
</dbReference>
<dbReference type="GO" id="GO:0003899">
    <property type="term" value="F:DNA-directed RNA polymerase activity"/>
    <property type="evidence" value="ECO:0007669"/>
    <property type="project" value="InterPro"/>
</dbReference>
<dbReference type="GO" id="GO:0008270">
    <property type="term" value="F:zinc ion binding"/>
    <property type="evidence" value="ECO:0007669"/>
    <property type="project" value="InterPro"/>
</dbReference>
<dbReference type="GO" id="GO:0006351">
    <property type="term" value="P:DNA-templated transcription"/>
    <property type="evidence" value="ECO:0007669"/>
    <property type="project" value="InterPro"/>
</dbReference>
<dbReference type="Gene3D" id="1.10.10.60">
    <property type="entry name" value="Homeodomain-like"/>
    <property type="match status" value="1"/>
</dbReference>
<dbReference type="InterPro" id="IPR023580">
    <property type="entry name" value="RNA_pol_su_RPB10"/>
</dbReference>
<dbReference type="InterPro" id="IPR020789">
    <property type="entry name" value="RNA_pol_suN_Zn-BS"/>
</dbReference>
<dbReference type="InterPro" id="IPR000268">
    <property type="entry name" value="RPABC5/Rpb10"/>
</dbReference>
<dbReference type="Pfam" id="PF01194">
    <property type="entry name" value="RNA_pol_N"/>
    <property type="match status" value="1"/>
</dbReference>
<dbReference type="SUPFAM" id="SSF46924">
    <property type="entry name" value="RNA polymerase subunit RPB10"/>
    <property type="match status" value="1"/>
</dbReference>
<dbReference type="PROSITE" id="PS01112">
    <property type="entry name" value="RNA_POL_N_8KD"/>
    <property type="match status" value="1"/>
</dbReference>
<gene>
    <name type="ordered locus">Ken-107</name>
</gene>
<keyword id="KW-0240">DNA-directed RNA polymerase</keyword>
<keyword id="KW-1035">Host cytoplasm</keyword>
<keyword id="KW-0479">Metal-binding</keyword>
<keyword id="KW-0804">Transcription</keyword>
<keyword id="KW-0862">Zinc</keyword>
<sequence length="80" mass="9031">MLIPVVCFTCGFPIGTYAAIFDKARTEYIKTKMGGTLPQNIPLDASLQIELKDLITALGIPMRVCCRTHLITTLDYRKYY</sequence>
<reference key="1">
    <citation type="submission" date="2003-03" db="EMBL/GenBank/DDBJ databases">
        <title>African swine fever virus genomes.</title>
        <authorList>
            <person name="Kutish G.F."/>
            <person name="Rock D.L."/>
        </authorList>
    </citation>
    <scope>NUCLEOTIDE SEQUENCE [LARGE SCALE GENOMIC DNA]</scope>
</reference>
<comment type="function">
    <text evidence="1">Component of the DNA-directed RNA polymerase (RNAP) that catalyzes the transcription in the cytoplasm of viral DNA into RNA using the four ribonucleoside triphosphates as substrates.</text>
</comment>
<comment type="subunit">
    <text evidence="2">Part of the viral DNA-directed RNA polymerase that consists of 8 polII-like subunits (RPB1, RPB2, RPB3, RPB5, RPB6, RPB7, RPB9, RPB10), a capping enzyme and a termination factor.</text>
</comment>
<comment type="subcellular location">
    <subcellularLocation>
        <location evidence="3">Host cytoplasm</location>
    </subcellularLocation>
</comment>
<comment type="similarity">
    <text evidence="3">Belongs to the archaeal RpoN/eukaryotic RPB10 RNA polymerase subunit family.</text>
</comment>
<organismHost>
    <name type="scientific">Ornithodoros</name>
    <name type="common">relapsing fever ticks</name>
    <dbReference type="NCBI Taxonomy" id="6937"/>
</organismHost>
<organismHost>
    <name type="scientific">Phacochoerus aethiopicus</name>
    <name type="common">Warthog</name>
    <dbReference type="NCBI Taxonomy" id="85517"/>
</organismHost>
<organismHost>
    <name type="scientific">Phacochoerus africanus</name>
    <name type="common">Warthog</name>
    <dbReference type="NCBI Taxonomy" id="41426"/>
</organismHost>
<organismHost>
    <name type="scientific">Potamochoerus larvatus</name>
    <name type="common">Bushpig</name>
    <dbReference type="NCBI Taxonomy" id="273792"/>
</organismHost>
<organismHost>
    <name type="scientific">Sus scrofa</name>
    <name type="common">Pig</name>
    <dbReference type="NCBI Taxonomy" id="9823"/>
</organismHost>